<feature type="chain" id="PRO_0000184795" description="Putative gamma-glutamylcyclotransferase PH0828">
    <location>
        <begin position="1"/>
        <end position="116"/>
    </location>
</feature>
<feature type="active site" description="Proton acceptor" evidence="1">
    <location>
        <position position="76"/>
    </location>
</feature>
<feature type="binding site" evidence="1">
    <location>
        <begin position="13"/>
        <end position="16"/>
    </location>
    <ligand>
        <name>substrate</name>
    </ligand>
</feature>
<feature type="strand" evidence="3">
    <location>
        <begin position="8"/>
        <end position="12"/>
    </location>
</feature>
<feature type="helix" evidence="3">
    <location>
        <begin position="23"/>
        <end position="26"/>
    </location>
</feature>
<feature type="strand" evidence="3">
    <location>
        <begin position="29"/>
        <end position="64"/>
    </location>
</feature>
<feature type="helix" evidence="3">
    <location>
        <begin position="66"/>
        <end position="72"/>
    </location>
</feature>
<feature type="helix" evidence="3">
    <location>
        <begin position="76"/>
        <end position="80"/>
    </location>
</feature>
<feature type="strand" evidence="3">
    <location>
        <begin position="81"/>
        <end position="86"/>
    </location>
</feature>
<feature type="strand" evidence="3">
    <location>
        <begin position="93"/>
        <end position="98"/>
    </location>
</feature>
<feature type="strand" evidence="3">
    <location>
        <begin position="104"/>
        <end position="106"/>
    </location>
</feature>
<organism>
    <name type="scientific">Pyrococcus horikoshii (strain ATCC 700860 / DSM 12428 / JCM 9974 / NBRC 100139 / OT-3)</name>
    <dbReference type="NCBI Taxonomy" id="70601"/>
    <lineage>
        <taxon>Archaea</taxon>
        <taxon>Methanobacteriati</taxon>
        <taxon>Methanobacteriota</taxon>
        <taxon>Thermococci</taxon>
        <taxon>Thermococcales</taxon>
        <taxon>Thermococcaceae</taxon>
        <taxon>Pyrococcus</taxon>
    </lineage>
</organism>
<proteinExistence type="evidence at protein level"/>
<dbReference type="EC" id="2.3.2.-"/>
<dbReference type="EMBL" id="BA000001">
    <property type="protein sequence ID" value="BAA29921.1"/>
    <property type="molecule type" value="Genomic_DNA"/>
</dbReference>
<dbReference type="PIR" id="G71132">
    <property type="entry name" value="G71132"/>
</dbReference>
<dbReference type="RefSeq" id="WP_010884924.1">
    <property type="nucleotide sequence ID" value="NC_000961.1"/>
</dbReference>
<dbReference type="PDB" id="1V30">
    <property type="method" value="X-ray"/>
    <property type="resolution" value="1.40 A"/>
    <property type="chains" value="A=1-116"/>
</dbReference>
<dbReference type="PDBsum" id="1V30"/>
<dbReference type="SMR" id="O58558"/>
<dbReference type="EnsemblBacteria" id="BAA29921">
    <property type="protein sequence ID" value="BAA29921"/>
    <property type="gene ID" value="BAA29921"/>
</dbReference>
<dbReference type="GeneID" id="1443159"/>
<dbReference type="KEGG" id="pho:PH0828"/>
<dbReference type="eggNOG" id="arCOG03271">
    <property type="taxonomic scope" value="Archaea"/>
</dbReference>
<dbReference type="OrthoDB" id="100169at2157"/>
<dbReference type="EvolutionaryTrace" id="O58558"/>
<dbReference type="Proteomes" id="UP000000752">
    <property type="component" value="Chromosome"/>
</dbReference>
<dbReference type="GO" id="GO:0016746">
    <property type="term" value="F:acyltransferase activity"/>
    <property type="evidence" value="ECO:0007669"/>
    <property type="project" value="UniProtKB-KW"/>
</dbReference>
<dbReference type="CDD" id="cd06661">
    <property type="entry name" value="GGCT_like"/>
    <property type="match status" value="1"/>
</dbReference>
<dbReference type="Gene3D" id="3.10.490.10">
    <property type="entry name" value="Gamma-glutamyl cyclotransferase-like"/>
    <property type="match status" value="1"/>
</dbReference>
<dbReference type="InterPro" id="IPR009288">
    <property type="entry name" value="AIG2-like_dom"/>
</dbReference>
<dbReference type="InterPro" id="IPR013024">
    <property type="entry name" value="GGCT-like"/>
</dbReference>
<dbReference type="InterPro" id="IPR036568">
    <property type="entry name" value="GGCT-like_sf"/>
</dbReference>
<dbReference type="Pfam" id="PF06094">
    <property type="entry name" value="GGACT"/>
    <property type="match status" value="1"/>
</dbReference>
<dbReference type="SUPFAM" id="SSF110857">
    <property type="entry name" value="Gamma-glutamyl cyclotransferase-like"/>
    <property type="match status" value="1"/>
</dbReference>
<gene>
    <name type="ordered locus">PH0828</name>
</gene>
<name>Y828_PYRHO</name>
<protein>
    <recommendedName>
        <fullName>Putative gamma-glutamylcyclotransferase PH0828</fullName>
        <ecNumber>2.3.2.-</ecNumber>
    </recommendedName>
</protein>
<accession>O58558</accession>
<sequence>MSYKEKSVRIAVYGTLRKGKPLHWYLKGAKFLGEDWIEGYQLYFEYLPYAVKGKGKLKVEVYEVDKETFERINEIEIGTGYRLVEVSTKFGKAFLWEWGSKPRGKRIKSGDFDEIR</sequence>
<keyword id="KW-0002">3D-structure</keyword>
<keyword id="KW-0012">Acyltransferase</keyword>
<keyword id="KW-0808">Transferase</keyword>
<reference key="1">
    <citation type="journal article" date="1998" name="DNA Res.">
        <title>Complete sequence and gene organization of the genome of a hyper-thermophilic archaebacterium, Pyrococcus horikoshii OT3.</title>
        <authorList>
            <person name="Kawarabayasi Y."/>
            <person name="Sawada M."/>
            <person name="Horikawa H."/>
            <person name="Haikawa Y."/>
            <person name="Hino Y."/>
            <person name="Yamamoto S."/>
            <person name="Sekine M."/>
            <person name="Baba S."/>
            <person name="Kosugi H."/>
            <person name="Hosoyama A."/>
            <person name="Nagai Y."/>
            <person name="Sakai M."/>
            <person name="Ogura K."/>
            <person name="Otsuka R."/>
            <person name="Nakazawa H."/>
            <person name="Takamiya M."/>
            <person name="Ohfuku Y."/>
            <person name="Funahashi T."/>
            <person name="Tanaka T."/>
            <person name="Kudoh Y."/>
            <person name="Yamazaki J."/>
            <person name="Kushida N."/>
            <person name="Oguchi A."/>
            <person name="Aoki K."/>
            <person name="Yoshizawa T."/>
            <person name="Nakamura Y."/>
            <person name="Robb F.T."/>
            <person name="Horikoshi K."/>
            <person name="Masuchi Y."/>
            <person name="Shizuya H."/>
            <person name="Kikuchi H."/>
        </authorList>
    </citation>
    <scope>NUCLEOTIDE SEQUENCE [LARGE SCALE GENOMIC DNA]</scope>
    <source>
        <strain>ATCC 700860 / DSM 12428 / JCM 9974 / NBRC 100139 / OT-3</strain>
    </source>
</reference>
<reference key="2">
    <citation type="journal article" date="2004" name="Proteins">
        <title>Crystal structure of hypothetical protein PH0828 from Pyrococcus horikoshii.</title>
        <authorList>
            <person name="Tajika Y."/>
            <person name="Sakai N."/>
            <person name="Tamura T."/>
            <person name="Yao M."/>
            <person name="Watanabe N."/>
            <person name="Tanaka I."/>
        </authorList>
    </citation>
    <scope>X-RAY CRYSTALLOGRAPHY (1.4 ANGSTROMS)</scope>
    <scope>PROPOSED FUNCTION</scope>
</reference>
<comment type="function">
    <text>Putative gamma-glutamylcyclotransferase.</text>
</comment>
<comment type="similarity">
    <text evidence="2">Belongs to the gamma-glutamylcyclotransferase family.</text>
</comment>
<evidence type="ECO:0000250" key="1"/>
<evidence type="ECO:0000305" key="2"/>
<evidence type="ECO:0007829" key="3">
    <source>
        <dbReference type="PDB" id="1V30"/>
    </source>
</evidence>